<name>DHSC_RICTY</name>
<evidence type="ECO:0000250" key="1"/>
<evidence type="ECO:0000305" key="2"/>
<feature type="chain" id="PRO_0000281052" description="Succinate dehydrogenase cytochrome b556 subunit">
    <location>
        <begin position="1"/>
        <end position="124"/>
    </location>
</feature>
<feature type="topological domain" description="Cytoplasmic" evidence="1">
    <location>
        <begin position="1"/>
        <end position="29"/>
    </location>
</feature>
<feature type="transmembrane region" description="Helical" evidence="1">
    <location>
        <begin position="30"/>
        <end position="55"/>
    </location>
</feature>
<feature type="topological domain" description="Periplasmic" evidence="1">
    <location>
        <begin position="56"/>
        <end position="67"/>
    </location>
</feature>
<feature type="transmembrane region" description="Helical" evidence="1">
    <location>
        <begin position="68"/>
        <end position="88"/>
    </location>
</feature>
<feature type="topological domain" description="Cytoplasmic" evidence="1">
    <location>
        <begin position="89"/>
        <end position="103"/>
    </location>
</feature>
<feature type="transmembrane region" description="Helical" evidence="1">
    <location>
        <begin position="104"/>
        <end position="124"/>
    </location>
</feature>
<feature type="binding site" description="axial binding residue" evidence="1">
    <location>
        <position position="83"/>
    </location>
    <ligand>
        <name>heme</name>
        <dbReference type="ChEBI" id="CHEBI:30413"/>
        <note>ligand shared with second transmembrane subunit</note>
    </ligand>
    <ligandPart>
        <name>Fe</name>
        <dbReference type="ChEBI" id="CHEBI:18248"/>
    </ligandPart>
</feature>
<reference key="1">
    <citation type="journal article" date="2004" name="J. Bacteriol.">
        <title>Complete genome sequence of Rickettsia typhi and comparison with sequences of other Rickettsiae.</title>
        <authorList>
            <person name="McLeod M.P."/>
            <person name="Qin X."/>
            <person name="Karpathy S.E."/>
            <person name="Gioia J."/>
            <person name="Highlander S.K."/>
            <person name="Fox G.E."/>
            <person name="McNeill T.Z."/>
            <person name="Jiang H."/>
            <person name="Muzny D."/>
            <person name="Jacob L.S."/>
            <person name="Hawes A.C."/>
            <person name="Sodergren E."/>
            <person name="Gill R."/>
            <person name="Hume J."/>
            <person name="Morgan M."/>
            <person name="Fan G."/>
            <person name="Amin A.G."/>
            <person name="Gibbs R.A."/>
            <person name="Hong C."/>
            <person name="Yu X.-J."/>
            <person name="Walker D.H."/>
            <person name="Weinstock G.M."/>
        </authorList>
    </citation>
    <scope>NUCLEOTIDE SEQUENCE [LARGE SCALE GENOMIC DNA]</scope>
    <source>
        <strain>ATCC VR-144 / Wilmington</strain>
    </source>
</reference>
<comment type="function">
    <text evidence="1">Membrane-anchoring subunit of succinate dehydrogenase (SDH).</text>
</comment>
<comment type="cofactor">
    <cofactor evidence="1">
        <name>heme</name>
        <dbReference type="ChEBI" id="CHEBI:30413"/>
    </cofactor>
    <text evidence="1">The heme is bound between the two transmembrane subunits.</text>
</comment>
<comment type="pathway">
    <text>Carbohydrate metabolism; tricarboxylic acid cycle.</text>
</comment>
<comment type="subunit">
    <text evidence="1">Part of an enzyme complex containing four subunits: a flavoprotein, an iron-sulfur protein, plus two membrane-anchoring proteins, SdhC and SdhD. The complex can form homotrimers (By similarity).</text>
</comment>
<comment type="subcellular location">
    <subcellularLocation>
        <location>Cell inner membrane</location>
        <topology>Multi-pass membrane protein</topology>
    </subcellularLocation>
</comment>
<comment type="similarity">
    <text evidence="2">Belongs to the cytochrome b560 family.</text>
</comment>
<keyword id="KW-0997">Cell inner membrane</keyword>
<keyword id="KW-1003">Cell membrane</keyword>
<keyword id="KW-0249">Electron transport</keyword>
<keyword id="KW-0349">Heme</keyword>
<keyword id="KW-0408">Iron</keyword>
<keyword id="KW-0472">Membrane</keyword>
<keyword id="KW-0479">Metal-binding</keyword>
<keyword id="KW-0812">Transmembrane</keyword>
<keyword id="KW-1133">Transmembrane helix</keyword>
<keyword id="KW-0813">Transport</keyword>
<keyword id="KW-0816">Tricarboxylic acid cycle</keyword>
<accession>Q68XP1</accession>
<dbReference type="EMBL" id="AE017197">
    <property type="protein sequence ID" value="AAU03601.1"/>
    <property type="molecule type" value="Genomic_DNA"/>
</dbReference>
<dbReference type="RefSeq" id="WP_011190588.1">
    <property type="nucleotide sequence ID" value="NC_006142.1"/>
</dbReference>
<dbReference type="SMR" id="Q68XP1"/>
<dbReference type="KEGG" id="rty:RT0115"/>
<dbReference type="eggNOG" id="COG2009">
    <property type="taxonomic scope" value="Bacteria"/>
</dbReference>
<dbReference type="HOGENOM" id="CLU_094691_3_1_5"/>
<dbReference type="OrthoDB" id="9799441at2"/>
<dbReference type="UniPathway" id="UPA00223"/>
<dbReference type="Proteomes" id="UP000000604">
    <property type="component" value="Chromosome"/>
</dbReference>
<dbReference type="GO" id="GO:0005886">
    <property type="term" value="C:plasma membrane"/>
    <property type="evidence" value="ECO:0007669"/>
    <property type="project" value="UniProtKB-SubCell"/>
</dbReference>
<dbReference type="GO" id="GO:0009055">
    <property type="term" value="F:electron transfer activity"/>
    <property type="evidence" value="ECO:0007669"/>
    <property type="project" value="InterPro"/>
</dbReference>
<dbReference type="GO" id="GO:0046872">
    <property type="term" value="F:metal ion binding"/>
    <property type="evidence" value="ECO:0007669"/>
    <property type="project" value="UniProtKB-KW"/>
</dbReference>
<dbReference type="GO" id="GO:0006099">
    <property type="term" value="P:tricarboxylic acid cycle"/>
    <property type="evidence" value="ECO:0007669"/>
    <property type="project" value="UniProtKB-UniPathway"/>
</dbReference>
<dbReference type="CDD" id="cd03499">
    <property type="entry name" value="SQR_TypeC_SdhC"/>
    <property type="match status" value="1"/>
</dbReference>
<dbReference type="Gene3D" id="1.20.1300.10">
    <property type="entry name" value="Fumarate reductase/succinate dehydrogenase, transmembrane subunit"/>
    <property type="match status" value="1"/>
</dbReference>
<dbReference type="InterPro" id="IPR034804">
    <property type="entry name" value="SQR/QFR_C/D"/>
</dbReference>
<dbReference type="InterPro" id="IPR018495">
    <property type="entry name" value="Succ_DH_cyt_bsu_CS"/>
</dbReference>
<dbReference type="InterPro" id="IPR014314">
    <property type="entry name" value="Succ_DH_cytb556"/>
</dbReference>
<dbReference type="InterPro" id="IPR000701">
    <property type="entry name" value="SuccDH_FuR_B_TM-su"/>
</dbReference>
<dbReference type="NCBIfam" id="TIGR02970">
    <property type="entry name" value="succ_dehyd_cytB"/>
    <property type="match status" value="1"/>
</dbReference>
<dbReference type="PANTHER" id="PTHR10978">
    <property type="entry name" value="SUCCINATE DEHYDROGENASE CYTOCHROME B560 SUBUNIT"/>
    <property type="match status" value="1"/>
</dbReference>
<dbReference type="PANTHER" id="PTHR10978:SF5">
    <property type="entry name" value="SUCCINATE DEHYDROGENASE CYTOCHROME B560 SUBUNIT, MITOCHONDRIAL"/>
    <property type="match status" value="1"/>
</dbReference>
<dbReference type="Pfam" id="PF01127">
    <property type="entry name" value="Sdh_cyt"/>
    <property type="match status" value="1"/>
</dbReference>
<dbReference type="PIRSF" id="PIRSF000178">
    <property type="entry name" value="SDH_cyt_b560"/>
    <property type="match status" value="1"/>
</dbReference>
<dbReference type="SUPFAM" id="SSF81343">
    <property type="entry name" value="Fumarate reductase respiratory complex transmembrane subunits"/>
    <property type="match status" value="1"/>
</dbReference>
<dbReference type="PROSITE" id="PS01000">
    <property type="entry name" value="SDH_CYT_1"/>
    <property type="match status" value="1"/>
</dbReference>
<dbReference type="PROSITE" id="PS01001">
    <property type="entry name" value="SDH_CYT_2"/>
    <property type="match status" value="1"/>
</dbReference>
<proteinExistence type="inferred from homology"/>
<sequence>MTKIKQEIYNKRPTSPHLTIYKPQISSTLSILHRMTGVALFFVVSILVWWLILSKYDNNYLQLARCCIIKICLVAFSYAWCYHLCNGIRHLFWDIGYGFSIRAVNITGWCVVVCSILLTMLLWV</sequence>
<organism>
    <name type="scientific">Rickettsia typhi (strain ATCC VR-144 / Wilmington)</name>
    <dbReference type="NCBI Taxonomy" id="257363"/>
    <lineage>
        <taxon>Bacteria</taxon>
        <taxon>Pseudomonadati</taxon>
        <taxon>Pseudomonadota</taxon>
        <taxon>Alphaproteobacteria</taxon>
        <taxon>Rickettsiales</taxon>
        <taxon>Rickettsiaceae</taxon>
        <taxon>Rickettsieae</taxon>
        <taxon>Rickettsia</taxon>
        <taxon>typhus group</taxon>
    </lineage>
</organism>
<gene>
    <name type="primary">sdhC</name>
    <name type="ordered locus">RT0115</name>
</gene>
<protein>
    <recommendedName>
        <fullName>Succinate dehydrogenase cytochrome b556 subunit</fullName>
        <shortName>Cytochrome b-556</shortName>
    </recommendedName>
</protein>